<name>TPIS_SHEB9</name>
<feature type="chain" id="PRO_1000076659" description="Triosephosphate isomerase">
    <location>
        <begin position="1"/>
        <end position="260"/>
    </location>
</feature>
<feature type="active site" description="Electrophile" evidence="1">
    <location>
        <position position="103"/>
    </location>
</feature>
<feature type="active site" description="Proton acceptor" evidence="1">
    <location>
        <position position="175"/>
    </location>
</feature>
<feature type="binding site" evidence="1">
    <location>
        <begin position="11"/>
        <end position="13"/>
    </location>
    <ligand>
        <name>substrate</name>
    </ligand>
</feature>
<feature type="binding site" evidence="1">
    <location>
        <position position="181"/>
    </location>
    <ligand>
        <name>substrate</name>
    </ligand>
</feature>
<feature type="binding site" evidence="1">
    <location>
        <position position="220"/>
    </location>
    <ligand>
        <name>substrate</name>
    </ligand>
</feature>
<feature type="binding site" evidence="1">
    <location>
        <begin position="241"/>
        <end position="242"/>
    </location>
    <ligand>
        <name>substrate</name>
    </ligand>
</feature>
<reference key="1">
    <citation type="submission" date="2007-11" db="EMBL/GenBank/DDBJ databases">
        <title>Complete sequence of chromosome of Shewanella baltica OS195.</title>
        <authorList>
            <consortium name="US DOE Joint Genome Institute"/>
            <person name="Copeland A."/>
            <person name="Lucas S."/>
            <person name="Lapidus A."/>
            <person name="Barry K."/>
            <person name="Glavina del Rio T."/>
            <person name="Dalin E."/>
            <person name="Tice H."/>
            <person name="Pitluck S."/>
            <person name="Chain P."/>
            <person name="Malfatti S."/>
            <person name="Shin M."/>
            <person name="Vergez L."/>
            <person name="Schmutz J."/>
            <person name="Larimer F."/>
            <person name="Land M."/>
            <person name="Hauser L."/>
            <person name="Kyrpides N."/>
            <person name="Kim E."/>
            <person name="Brettar I."/>
            <person name="Rodrigues J."/>
            <person name="Konstantinidis K."/>
            <person name="Klappenbach J."/>
            <person name="Hofle M."/>
            <person name="Tiedje J."/>
            <person name="Richardson P."/>
        </authorList>
    </citation>
    <scope>NUCLEOTIDE SEQUENCE [LARGE SCALE GENOMIC DNA]</scope>
    <source>
        <strain>OS195</strain>
    </source>
</reference>
<comment type="function">
    <text evidence="1">Involved in the gluconeogenesis. Catalyzes stereospecifically the conversion of dihydroxyacetone phosphate (DHAP) to D-glyceraldehyde-3-phosphate (G3P).</text>
</comment>
<comment type="catalytic activity">
    <reaction evidence="1">
        <text>D-glyceraldehyde 3-phosphate = dihydroxyacetone phosphate</text>
        <dbReference type="Rhea" id="RHEA:18585"/>
        <dbReference type="ChEBI" id="CHEBI:57642"/>
        <dbReference type="ChEBI" id="CHEBI:59776"/>
        <dbReference type="EC" id="5.3.1.1"/>
    </reaction>
</comment>
<comment type="pathway">
    <text evidence="1">Carbohydrate biosynthesis; gluconeogenesis.</text>
</comment>
<comment type="pathway">
    <text evidence="1">Carbohydrate degradation; glycolysis; D-glyceraldehyde 3-phosphate from glycerone phosphate: step 1/1.</text>
</comment>
<comment type="subunit">
    <text evidence="1">Homodimer.</text>
</comment>
<comment type="subcellular location">
    <subcellularLocation>
        <location evidence="1">Cytoplasm</location>
    </subcellularLocation>
</comment>
<comment type="similarity">
    <text evidence="1">Belongs to the triosephosphate isomerase family.</text>
</comment>
<organism>
    <name type="scientific">Shewanella baltica (strain OS195)</name>
    <dbReference type="NCBI Taxonomy" id="399599"/>
    <lineage>
        <taxon>Bacteria</taxon>
        <taxon>Pseudomonadati</taxon>
        <taxon>Pseudomonadota</taxon>
        <taxon>Gammaproteobacteria</taxon>
        <taxon>Alteromonadales</taxon>
        <taxon>Shewanellaceae</taxon>
        <taxon>Shewanella</taxon>
    </lineage>
</organism>
<gene>
    <name evidence="1" type="primary">tpiA</name>
    <name type="ordered locus">Sbal195_3421</name>
</gene>
<evidence type="ECO:0000255" key="1">
    <source>
        <dbReference type="HAMAP-Rule" id="MF_00147"/>
    </source>
</evidence>
<proteinExistence type="inferred from homology"/>
<protein>
    <recommendedName>
        <fullName evidence="1">Triosephosphate isomerase</fullName>
        <shortName evidence="1">TIM</shortName>
        <shortName evidence="1">TPI</shortName>
        <ecNumber evidence="1">5.3.1.1</ecNumber>
    </recommendedName>
    <alternativeName>
        <fullName evidence="1">Triose-phosphate isomerase</fullName>
    </alternativeName>
</protein>
<sequence>MALRRPMVAGNWKMNGSAALAQELFKKFASKLQNDSAEVVLCPPSIYLESVRQLLEANKEALDGSLVRMGAQNLSQHDFGAYTGEVSGQMLKDSGCRYVIIGHSERRRMYGETSNIVAEKFAAAQKHGLTPILCVGESGPAREARRTFEVIAEELDIVIQKNGTMAFDNAIIAYEPLWAVGTGKSATPEQAQEVHAFIRKRLSEVSPFIGENIRILYGGSVTPSNAADLFAQPDVDGGLIGGASLNSSEFLSLCTIAMSA</sequence>
<keyword id="KW-0963">Cytoplasm</keyword>
<keyword id="KW-0312">Gluconeogenesis</keyword>
<keyword id="KW-0324">Glycolysis</keyword>
<keyword id="KW-0413">Isomerase</keyword>
<dbReference type="EC" id="5.3.1.1" evidence="1"/>
<dbReference type="EMBL" id="CP000891">
    <property type="protein sequence ID" value="ABX50583.1"/>
    <property type="molecule type" value="Genomic_DNA"/>
</dbReference>
<dbReference type="RefSeq" id="WP_006082720.1">
    <property type="nucleotide sequence ID" value="NC_009997.1"/>
</dbReference>
<dbReference type="SMR" id="A9KZX5"/>
<dbReference type="GeneID" id="67444453"/>
<dbReference type="KEGG" id="sbn:Sbal195_3421"/>
<dbReference type="HOGENOM" id="CLU_024251_2_1_6"/>
<dbReference type="UniPathway" id="UPA00109">
    <property type="reaction ID" value="UER00189"/>
</dbReference>
<dbReference type="UniPathway" id="UPA00138"/>
<dbReference type="Proteomes" id="UP000000770">
    <property type="component" value="Chromosome"/>
</dbReference>
<dbReference type="GO" id="GO:0005829">
    <property type="term" value="C:cytosol"/>
    <property type="evidence" value="ECO:0007669"/>
    <property type="project" value="TreeGrafter"/>
</dbReference>
<dbReference type="GO" id="GO:0004807">
    <property type="term" value="F:triose-phosphate isomerase activity"/>
    <property type="evidence" value="ECO:0007669"/>
    <property type="project" value="UniProtKB-UniRule"/>
</dbReference>
<dbReference type="GO" id="GO:0006094">
    <property type="term" value="P:gluconeogenesis"/>
    <property type="evidence" value="ECO:0007669"/>
    <property type="project" value="UniProtKB-UniRule"/>
</dbReference>
<dbReference type="GO" id="GO:0046166">
    <property type="term" value="P:glyceraldehyde-3-phosphate biosynthetic process"/>
    <property type="evidence" value="ECO:0007669"/>
    <property type="project" value="TreeGrafter"/>
</dbReference>
<dbReference type="GO" id="GO:0019563">
    <property type="term" value="P:glycerol catabolic process"/>
    <property type="evidence" value="ECO:0007669"/>
    <property type="project" value="TreeGrafter"/>
</dbReference>
<dbReference type="GO" id="GO:0006096">
    <property type="term" value="P:glycolytic process"/>
    <property type="evidence" value="ECO:0007669"/>
    <property type="project" value="UniProtKB-UniRule"/>
</dbReference>
<dbReference type="CDD" id="cd00311">
    <property type="entry name" value="TIM"/>
    <property type="match status" value="1"/>
</dbReference>
<dbReference type="FunFam" id="3.20.20.70:FF:000016">
    <property type="entry name" value="Triosephosphate isomerase"/>
    <property type="match status" value="1"/>
</dbReference>
<dbReference type="Gene3D" id="3.20.20.70">
    <property type="entry name" value="Aldolase class I"/>
    <property type="match status" value="1"/>
</dbReference>
<dbReference type="HAMAP" id="MF_00147_B">
    <property type="entry name" value="TIM_B"/>
    <property type="match status" value="1"/>
</dbReference>
<dbReference type="InterPro" id="IPR013785">
    <property type="entry name" value="Aldolase_TIM"/>
</dbReference>
<dbReference type="InterPro" id="IPR035990">
    <property type="entry name" value="TIM_sf"/>
</dbReference>
<dbReference type="InterPro" id="IPR022896">
    <property type="entry name" value="TrioseP_Isoase_bac/euk"/>
</dbReference>
<dbReference type="InterPro" id="IPR000652">
    <property type="entry name" value="Triosephosphate_isomerase"/>
</dbReference>
<dbReference type="InterPro" id="IPR020861">
    <property type="entry name" value="Triosephosphate_isomerase_AS"/>
</dbReference>
<dbReference type="NCBIfam" id="TIGR00419">
    <property type="entry name" value="tim"/>
    <property type="match status" value="1"/>
</dbReference>
<dbReference type="PANTHER" id="PTHR21139">
    <property type="entry name" value="TRIOSEPHOSPHATE ISOMERASE"/>
    <property type="match status" value="1"/>
</dbReference>
<dbReference type="PANTHER" id="PTHR21139:SF42">
    <property type="entry name" value="TRIOSEPHOSPHATE ISOMERASE"/>
    <property type="match status" value="1"/>
</dbReference>
<dbReference type="Pfam" id="PF00121">
    <property type="entry name" value="TIM"/>
    <property type="match status" value="1"/>
</dbReference>
<dbReference type="SUPFAM" id="SSF51351">
    <property type="entry name" value="Triosephosphate isomerase (TIM)"/>
    <property type="match status" value="1"/>
</dbReference>
<dbReference type="PROSITE" id="PS00171">
    <property type="entry name" value="TIM_1"/>
    <property type="match status" value="1"/>
</dbReference>
<dbReference type="PROSITE" id="PS51440">
    <property type="entry name" value="TIM_2"/>
    <property type="match status" value="1"/>
</dbReference>
<accession>A9KZX5</accession>